<reference key="1">
    <citation type="journal article" date="2005" name="BMC Genomics">
        <title>Characterization of 954 bovine full-CDS cDNA sequences.</title>
        <authorList>
            <person name="Harhay G.P."/>
            <person name="Sonstegard T.S."/>
            <person name="Keele J.W."/>
            <person name="Heaton M.P."/>
            <person name="Clawson M.L."/>
            <person name="Snelling W.M."/>
            <person name="Wiedmann R.T."/>
            <person name="Van Tassell C.P."/>
            <person name="Smith T.P.L."/>
        </authorList>
    </citation>
    <scope>NUCLEOTIDE SEQUENCE [LARGE SCALE MRNA]</scope>
</reference>
<dbReference type="EC" id="2.7.12.2"/>
<dbReference type="EMBL" id="BT020798">
    <property type="protein sequence ID" value="AAX08815.1"/>
    <property type="molecule type" value="mRNA"/>
</dbReference>
<dbReference type="RefSeq" id="NP_001029217.1">
    <property type="nucleotide sequence ID" value="NM_001034045.1"/>
</dbReference>
<dbReference type="SMR" id="Q5E9X2"/>
<dbReference type="FunCoup" id="Q5E9X2">
    <property type="interactions" value="1682"/>
</dbReference>
<dbReference type="STRING" id="9913.ENSBTAP00000002115"/>
<dbReference type="PaxDb" id="9913-ENSBTAP00000002115"/>
<dbReference type="Ensembl" id="ENSBTAT00000002115.3">
    <property type="protein sequence ID" value="ENSBTAP00000002115.2"/>
    <property type="gene ID" value="ENSBTAG00000001609.7"/>
</dbReference>
<dbReference type="GeneID" id="286883"/>
<dbReference type="KEGG" id="bta:286883"/>
<dbReference type="CTD" id="5608"/>
<dbReference type="VEuPathDB" id="HostDB:ENSBTAG00000001609"/>
<dbReference type="VGNC" id="VGNC:31187">
    <property type="gene designation" value="MAP2K6"/>
</dbReference>
<dbReference type="eggNOG" id="KOG0984">
    <property type="taxonomic scope" value="Eukaryota"/>
</dbReference>
<dbReference type="GeneTree" id="ENSGT00940000157836"/>
<dbReference type="HOGENOM" id="CLU_000288_63_23_1"/>
<dbReference type="InParanoid" id="Q5E9X2"/>
<dbReference type="OMA" id="FPYNTWG"/>
<dbReference type="OrthoDB" id="10252354at2759"/>
<dbReference type="TreeFam" id="TF350701"/>
<dbReference type="Reactome" id="R-BTA-168638">
    <property type="pathway name" value="NOD1/2 Signaling Pathway"/>
</dbReference>
<dbReference type="Reactome" id="R-BTA-2559580">
    <property type="pathway name" value="Oxidative Stress Induced Senescence"/>
</dbReference>
<dbReference type="Reactome" id="R-BTA-450302">
    <property type="pathway name" value="activated TAK1 mediates p38 MAPK activation"/>
</dbReference>
<dbReference type="Reactome" id="R-BTA-6811555">
    <property type="pathway name" value="PI5P Regulates TP53 Acetylation"/>
</dbReference>
<dbReference type="Reactome" id="R-BTA-9020702">
    <property type="pathway name" value="Interleukin-1 signaling"/>
</dbReference>
<dbReference type="Reactome" id="R-BTA-9833482">
    <property type="pathway name" value="PKR-mediated signaling"/>
</dbReference>
<dbReference type="Proteomes" id="UP000009136">
    <property type="component" value="Chromosome 19"/>
</dbReference>
<dbReference type="Bgee" id="ENSBTAG00000001609">
    <property type="expression patterns" value="Expressed in gluteal muscle and 107 other cell types or tissues"/>
</dbReference>
<dbReference type="GO" id="GO:0005737">
    <property type="term" value="C:cytoplasm"/>
    <property type="evidence" value="ECO:0007669"/>
    <property type="project" value="UniProtKB-SubCell"/>
</dbReference>
<dbReference type="GO" id="GO:0005856">
    <property type="term" value="C:cytoskeleton"/>
    <property type="evidence" value="ECO:0007669"/>
    <property type="project" value="UniProtKB-SubCell"/>
</dbReference>
<dbReference type="GO" id="GO:0005634">
    <property type="term" value="C:nucleus"/>
    <property type="evidence" value="ECO:0007669"/>
    <property type="project" value="UniProtKB-SubCell"/>
</dbReference>
<dbReference type="GO" id="GO:0005524">
    <property type="term" value="F:ATP binding"/>
    <property type="evidence" value="ECO:0007669"/>
    <property type="project" value="UniProtKB-KW"/>
</dbReference>
<dbReference type="GO" id="GO:0004708">
    <property type="term" value="F:MAP kinase kinase activity"/>
    <property type="evidence" value="ECO:0000318"/>
    <property type="project" value="GO_Central"/>
</dbReference>
<dbReference type="GO" id="GO:0106310">
    <property type="term" value="F:protein serine kinase activity"/>
    <property type="evidence" value="ECO:0007669"/>
    <property type="project" value="RHEA"/>
</dbReference>
<dbReference type="GO" id="GO:0004674">
    <property type="term" value="F:protein serine/threonine kinase activity"/>
    <property type="evidence" value="ECO:0007669"/>
    <property type="project" value="UniProtKB-KW"/>
</dbReference>
<dbReference type="GO" id="GO:0004713">
    <property type="term" value="F:protein tyrosine kinase activity"/>
    <property type="evidence" value="ECO:0007669"/>
    <property type="project" value="UniProtKB-KW"/>
</dbReference>
<dbReference type="GO" id="GO:0006915">
    <property type="term" value="P:apoptotic process"/>
    <property type="evidence" value="ECO:0007669"/>
    <property type="project" value="UniProtKB-KW"/>
</dbReference>
<dbReference type="GO" id="GO:0000165">
    <property type="term" value="P:MAPK cascade"/>
    <property type="evidence" value="ECO:0000318"/>
    <property type="project" value="GO_Central"/>
</dbReference>
<dbReference type="CDD" id="cd06617">
    <property type="entry name" value="PKc_MKK3_6"/>
    <property type="match status" value="1"/>
</dbReference>
<dbReference type="FunFam" id="3.30.200.20:FF:000126">
    <property type="entry name" value="Dual specificity mitogen-activated protein kinase kinase 4"/>
    <property type="match status" value="1"/>
</dbReference>
<dbReference type="FunFam" id="1.10.510.10:FF:000158">
    <property type="entry name" value="Dual specificity mitogen-activated protein kinase kinase 6"/>
    <property type="match status" value="1"/>
</dbReference>
<dbReference type="Gene3D" id="3.30.200.20">
    <property type="entry name" value="Phosphorylase Kinase, domain 1"/>
    <property type="match status" value="1"/>
</dbReference>
<dbReference type="Gene3D" id="1.10.510.10">
    <property type="entry name" value="Transferase(Phosphotransferase) domain 1"/>
    <property type="match status" value="1"/>
</dbReference>
<dbReference type="InterPro" id="IPR011009">
    <property type="entry name" value="Kinase-like_dom_sf"/>
</dbReference>
<dbReference type="InterPro" id="IPR000719">
    <property type="entry name" value="Prot_kinase_dom"/>
</dbReference>
<dbReference type="InterPro" id="IPR017441">
    <property type="entry name" value="Protein_kinase_ATP_BS"/>
</dbReference>
<dbReference type="InterPro" id="IPR008271">
    <property type="entry name" value="Ser/Thr_kinase_AS"/>
</dbReference>
<dbReference type="PANTHER" id="PTHR48013">
    <property type="entry name" value="DUAL SPECIFICITY MITOGEN-ACTIVATED PROTEIN KINASE KINASE 5-RELATED"/>
    <property type="match status" value="1"/>
</dbReference>
<dbReference type="PANTHER" id="PTHR48013:SF12">
    <property type="entry name" value="DUAL SPECIFICITY MITOGEN-ACTIVATED PROTEIN KINASE KINASE 6"/>
    <property type="match status" value="1"/>
</dbReference>
<dbReference type="Pfam" id="PF00069">
    <property type="entry name" value="Pkinase"/>
    <property type="match status" value="1"/>
</dbReference>
<dbReference type="PIRSF" id="PIRSF000654">
    <property type="entry name" value="Integrin-linked_kinase"/>
    <property type="match status" value="1"/>
</dbReference>
<dbReference type="SMART" id="SM00220">
    <property type="entry name" value="S_TKc"/>
    <property type="match status" value="1"/>
</dbReference>
<dbReference type="SUPFAM" id="SSF56112">
    <property type="entry name" value="Protein kinase-like (PK-like)"/>
    <property type="match status" value="1"/>
</dbReference>
<dbReference type="PROSITE" id="PS00107">
    <property type="entry name" value="PROTEIN_KINASE_ATP"/>
    <property type="match status" value="1"/>
</dbReference>
<dbReference type="PROSITE" id="PS50011">
    <property type="entry name" value="PROTEIN_KINASE_DOM"/>
    <property type="match status" value="1"/>
</dbReference>
<dbReference type="PROSITE" id="PS00108">
    <property type="entry name" value="PROTEIN_KINASE_ST"/>
    <property type="match status" value="1"/>
</dbReference>
<keyword id="KW-0053">Apoptosis</keyword>
<keyword id="KW-0067">ATP-binding</keyword>
<keyword id="KW-0963">Cytoplasm</keyword>
<keyword id="KW-0206">Cytoskeleton</keyword>
<keyword id="KW-0418">Kinase</keyword>
<keyword id="KW-0547">Nucleotide-binding</keyword>
<keyword id="KW-0539">Nucleus</keyword>
<keyword id="KW-0597">Phosphoprotein</keyword>
<keyword id="KW-1185">Reference proteome</keyword>
<keyword id="KW-0723">Serine/threonine-protein kinase</keyword>
<keyword id="KW-0346">Stress response</keyword>
<keyword id="KW-0804">Transcription</keyword>
<keyword id="KW-0805">Transcription regulation</keyword>
<keyword id="KW-0808">Transferase</keyword>
<keyword id="KW-0829">Tyrosine-protein kinase</keyword>
<keyword id="KW-0832">Ubl conjugation</keyword>
<feature type="chain" id="PRO_0000248967" description="Dual specificity mitogen-activated protein kinase kinase 6">
    <location>
        <begin position="1"/>
        <end position="334"/>
    </location>
</feature>
<feature type="domain" description="Protein kinase" evidence="3">
    <location>
        <begin position="53"/>
        <end position="314"/>
    </location>
</feature>
<feature type="region of interest" description="Disordered" evidence="5">
    <location>
        <begin position="1"/>
        <end position="34"/>
    </location>
</feature>
<feature type="region of interest" description="D domain" evidence="1">
    <location>
        <begin position="4"/>
        <end position="19"/>
    </location>
</feature>
<feature type="region of interest" description="DVD domain" evidence="1">
    <location>
        <begin position="311"/>
        <end position="334"/>
    </location>
</feature>
<feature type="compositionally biased region" description="Basic residues" evidence="5">
    <location>
        <begin position="1"/>
        <end position="11"/>
    </location>
</feature>
<feature type="active site" description="Proton acceptor" evidence="3 4">
    <location>
        <position position="179"/>
    </location>
</feature>
<feature type="binding site" evidence="3">
    <location>
        <begin position="59"/>
        <end position="67"/>
    </location>
    <ligand>
        <name>ATP</name>
        <dbReference type="ChEBI" id="CHEBI:30616"/>
    </ligand>
</feature>
<feature type="binding site" evidence="3">
    <location>
        <position position="82"/>
    </location>
    <ligand>
        <name>ATP</name>
        <dbReference type="ChEBI" id="CHEBI:30616"/>
    </ligand>
</feature>
<feature type="modified residue" description="Phosphoserine; by MAPK3" evidence="2">
    <location>
        <position position="207"/>
    </location>
</feature>
<feature type="modified residue" description="Phosphothreonine; by MAPK3" evidence="2">
    <location>
        <position position="211"/>
    </location>
</feature>
<gene>
    <name type="primary">MAP2K6</name>
</gene>
<organism>
    <name type="scientific">Bos taurus</name>
    <name type="common">Bovine</name>
    <dbReference type="NCBI Taxonomy" id="9913"/>
    <lineage>
        <taxon>Eukaryota</taxon>
        <taxon>Metazoa</taxon>
        <taxon>Chordata</taxon>
        <taxon>Craniata</taxon>
        <taxon>Vertebrata</taxon>
        <taxon>Euteleostomi</taxon>
        <taxon>Mammalia</taxon>
        <taxon>Eutheria</taxon>
        <taxon>Laurasiatheria</taxon>
        <taxon>Artiodactyla</taxon>
        <taxon>Ruminantia</taxon>
        <taxon>Pecora</taxon>
        <taxon>Bovidae</taxon>
        <taxon>Bovinae</taxon>
        <taxon>Bos</taxon>
    </lineage>
</organism>
<accession>Q5E9X2</accession>
<comment type="function">
    <text evidence="2">Dual specificity protein kinase which acts as an essential component of the MAP kinase signal transduction pathway. With MAP3K3/MKK3, catalyzes the concomitant phosphorylation of a threonine and a tyrosine residue in the MAP kinases p38 MAPK11, MAPK12, MAPK13 and MAPK14 and plays an important role in the regulation of cellular responses to cytokines and all kinds of stresses. Especially, MAP2K3/MKK3 and MAP2K6/MKK6 are both essential for the activation of MAPK11 and MAPK13 induced by environmental stress, whereas MAP2K6/MKK6 is the major MAPK11 activator in response to TNF. MAP2K6/MKK6 also phosphorylates and activates PAK6. The p38 MAP kinase signal transduction pathway leads to direct activation of transcription factors. Nuclear targets of p38 MAP kinase include the transcription factors ATF2 and ELK1. Within the p38 MAPK signal transduction pathway, MAP3K6/MKK6 mediates phosphorylation of STAT4 through MAPK14 activation, and is therefore required for STAT4 activation and STAT4-regulated gene expression in response to IL-12 stimulation. The pathway is also crucial for IL-6-induced SOCS3 expression and down-regulation of IL-6-mediated gene induction; and for IFNG-dependent gene transcription. Has a role in osteoclast differentiation through NF-kappa-B transactivation by TNFSF11, and in endochondral ossification and since SOX9 is another likely downstream target of the p38 MAPK pathway. MAP2K6/MKK6 mediates apoptotic cell death in thymocytes. Acts also as a regulator for melanocytes dendricity, through the modulation of Rho family GTPases.</text>
</comment>
<comment type="catalytic activity">
    <reaction>
        <text>L-seryl-[protein] + ATP = O-phospho-L-seryl-[protein] + ADP + H(+)</text>
        <dbReference type="Rhea" id="RHEA:17989"/>
        <dbReference type="Rhea" id="RHEA-COMP:9863"/>
        <dbReference type="Rhea" id="RHEA-COMP:11604"/>
        <dbReference type="ChEBI" id="CHEBI:15378"/>
        <dbReference type="ChEBI" id="CHEBI:29999"/>
        <dbReference type="ChEBI" id="CHEBI:30616"/>
        <dbReference type="ChEBI" id="CHEBI:83421"/>
        <dbReference type="ChEBI" id="CHEBI:456216"/>
        <dbReference type="EC" id="2.7.12.2"/>
    </reaction>
</comment>
<comment type="catalytic activity">
    <reaction>
        <text>L-threonyl-[protein] + ATP = O-phospho-L-threonyl-[protein] + ADP + H(+)</text>
        <dbReference type="Rhea" id="RHEA:46608"/>
        <dbReference type="Rhea" id="RHEA-COMP:11060"/>
        <dbReference type="Rhea" id="RHEA-COMP:11605"/>
        <dbReference type="ChEBI" id="CHEBI:15378"/>
        <dbReference type="ChEBI" id="CHEBI:30013"/>
        <dbReference type="ChEBI" id="CHEBI:30616"/>
        <dbReference type="ChEBI" id="CHEBI:61977"/>
        <dbReference type="ChEBI" id="CHEBI:456216"/>
        <dbReference type="EC" id="2.7.12.2"/>
    </reaction>
</comment>
<comment type="catalytic activity">
    <reaction>
        <text>L-tyrosyl-[protein] + ATP = O-phospho-L-tyrosyl-[protein] + ADP + H(+)</text>
        <dbReference type="Rhea" id="RHEA:10596"/>
        <dbReference type="Rhea" id="RHEA-COMP:10136"/>
        <dbReference type="Rhea" id="RHEA-COMP:20101"/>
        <dbReference type="ChEBI" id="CHEBI:15378"/>
        <dbReference type="ChEBI" id="CHEBI:30616"/>
        <dbReference type="ChEBI" id="CHEBI:46858"/>
        <dbReference type="ChEBI" id="CHEBI:61978"/>
        <dbReference type="ChEBI" id="CHEBI:456216"/>
        <dbReference type="EC" id="2.7.12.2"/>
    </reaction>
</comment>
<comment type="activity regulation">
    <text evidence="1">Activated by dual phosphorylation on Ser-207 and Thr-211 in response to a variety of cellular stresses, including UV radiation, osmotic shock, hypoxia, inflammatory cytokines, interferon gamma (IFNG), and less often by growth factors. MAP2K6/MKK6 is activated by the majority of M3Ks, such as MAP3K5/ASK1, MAP3K1/MEKK1, MAP3K2/MEKK2, MAP3K3/MEKK3, MAP3K4/MEKK4, MAP3K7/TAK1, MAP3K11/MLK3 and MAP3K17/TAOK2.</text>
</comment>
<comment type="subunit">
    <text evidence="1">Dimer. Interacts (via its D domain) with its substrates MAPK11, MAPK12, MAPK13 and MAPK14. Interacts (via its DVD domain) with MAP3Ks activators like MAP3K5/ASK1, MAP3K1/MEKK1, MAP3K2/MEKK2, MAP3K3/MEKK3, MAP3K4/MEKK4, MAP3K7/TAK1, MAP3K11/MLK3 and MAP3K17/TAOK2. Interacts with DCTN1. Interacts with EIF2AK2/PKR.</text>
</comment>
<comment type="subcellular location">
    <subcellularLocation>
        <location evidence="2">Nucleus</location>
    </subcellularLocation>
    <subcellularLocation>
        <location evidence="2">Cytoplasm</location>
    </subcellularLocation>
    <subcellularLocation>
        <location evidence="2">Cytoplasm</location>
        <location evidence="2">Cytoskeleton</location>
    </subcellularLocation>
    <text evidence="2">Binds to microtubules.</text>
</comment>
<comment type="domain">
    <text evidence="1">The DVD domain (residues 311-334) contains a conserved docking site and is found in the mammalian MAP kinase kinases (MAP2Ks). The DVD sites bind to their specific upstream MAP kinase kinase kinases (MAP3Ks) and are essential for activation (By similarity).</text>
</comment>
<comment type="domain">
    <text evidence="1">The D domain (residues 4-19) contains a conserved docking site and is required for the binding to MAPK substrates.</text>
</comment>
<comment type="PTM">
    <text evidence="2">Weakly autophosphorylated. Phosphorylated at Ser-207 and Thr-211 by the majority of M3Ks, such as MAP3K5/ASK1, MAP3K1/MEKK1, MAP3K2/MEKK2, MAP3K3/MEKK3, MAP3K4/MEKK4, MAP3K7/TAK1, MAP3K11/MLK3 and MAP3K17/TAOK2.</text>
</comment>
<comment type="PTM">
    <text evidence="2">In response to genotoxic stress, MAP3K-phosphorylated MAP2K6 is ubiquitinated and degraded by the SCF(FBXO31) complex.</text>
</comment>
<comment type="similarity">
    <text evidence="6">Belongs to the protein kinase superfamily. STE Ser/Thr protein kinase family. MAP kinase kinase subfamily.</text>
</comment>
<evidence type="ECO:0000250" key="1"/>
<evidence type="ECO:0000250" key="2">
    <source>
        <dbReference type="UniProtKB" id="P52564"/>
    </source>
</evidence>
<evidence type="ECO:0000255" key="3">
    <source>
        <dbReference type="PROSITE-ProRule" id="PRU00159"/>
    </source>
</evidence>
<evidence type="ECO:0000255" key="4">
    <source>
        <dbReference type="PROSITE-ProRule" id="PRU10027"/>
    </source>
</evidence>
<evidence type="ECO:0000256" key="5">
    <source>
        <dbReference type="SAM" id="MobiDB-lite"/>
    </source>
</evidence>
<evidence type="ECO:0000305" key="6"/>
<protein>
    <recommendedName>
        <fullName>Dual specificity mitogen-activated protein kinase kinase 6</fullName>
        <shortName>MAP kinase kinase 6</shortName>
        <shortName>MAPKK 6</shortName>
        <ecNumber>2.7.12.2</ecNumber>
    </recommendedName>
    <alternativeName>
        <fullName>MAPK/ERK kinase 6</fullName>
        <shortName>MEK 6</shortName>
    </alternativeName>
</protein>
<sequence length="334" mass="37578">MSQSKGKKRNPGLKIPKEAFEQPQTSSTPPRDLDSKACISIGNQNFEVKADDLEPIVELGRGAYGVVEKMRHVPSEQIMAVKRIRATVNSQEQKRLLMDLDISMRTVDCPFTVTFYGALFREGDVWICMELMDTSLDKFYKQVIDKGQTIPEDILGKIAVSIVKALEHLHSKLSVIHRDVKPSNVLINALGQVKMCDFGISGYLVDSVAKTIDAGCKPYMAPERINPELNQKGYSVKSDIWSLGITMIELAILRFPYDSWGTPFQQLKQVVEEPSPQLPADKFSEEFVDFTSQCLKKNSKERPTYPELMQHPFFTLHESKATDVASFVKSILGD</sequence>
<name>MP2K6_BOVIN</name>
<proteinExistence type="evidence at transcript level"/>